<accession>Q1R7B9</accession>
<gene>
    <name evidence="1" type="primary">zapA</name>
    <name type="ordered locus">UTI89_C3297</name>
</gene>
<protein>
    <recommendedName>
        <fullName evidence="1">Cell division protein ZapA</fullName>
    </recommendedName>
    <alternativeName>
        <fullName evidence="1">Z ring-associated protein ZapA</fullName>
    </alternativeName>
</protein>
<dbReference type="EMBL" id="CP000243">
    <property type="protein sequence ID" value="ABE08745.1"/>
    <property type="molecule type" value="Genomic_DNA"/>
</dbReference>
<dbReference type="RefSeq" id="WP_001276008.1">
    <property type="nucleotide sequence ID" value="NZ_CP064825.1"/>
</dbReference>
<dbReference type="SMR" id="Q1R7B9"/>
<dbReference type="GeneID" id="93779091"/>
<dbReference type="KEGG" id="eci:UTI89_C3297"/>
<dbReference type="HOGENOM" id="CLU_116623_3_0_6"/>
<dbReference type="Proteomes" id="UP000001952">
    <property type="component" value="Chromosome"/>
</dbReference>
<dbReference type="GO" id="GO:0032153">
    <property type="term" value="C:cell division site"/>
    <property type="evidence" value="ECO:0007669"/>
    <property type="project" value="TreeGrafter"/>
</dbReference>
<dbReference type="GO" id="GO:0030428">
    <property type="term" value="C:cell septum"/>
    <property type="evidence" value="ECO:0007669"/>
    <property type="project" value="TreeGrafter"/>
</dbReference>
<dbReference type="GO" id="GO:0005829">
    <property type="term" value="C:cytosol"/>
    <property type="evidence" value="ECO:0007669"/>
    <property type="project" value="TreeGrafter"/>
</dbReference>
<dbReference type="GO" id="GO:0005886">
    <property type="term" value="C:plasma membrane"/>
    <property type="evidence" value="ECO:0007669"/>
    <property type="project" value="UniProtKB-UniRule"/>
</dbReference>
<dbReference type="GO" id="GO:0000917">
    <property type="term" value="P:division septum assembly"/>
    <property type="evidence" value="ECO:0007669"/>
    <property type="project" value="UniProtKB-KW"/>
</dbReference>
<dbReference type="GO" id="GO:0043093">
    <property type="term" value="P:FtsZ-dependent cytokinesis"/>
    <property type="evidence" value="ECO:0007669"/>
    <property type="project" value="TreeGrafter"/>
</dbReference>
<dbReference type="GO" id="GO:0000921">
    <property type="term" value="P:septin ring assembly"/>
    <property type="evidence" value="ECO:0007669"/>
    <property type="project" value="TreeGrafter"/>
</dbReference>
<dbReference type="FunFam" id="1.20.5.50:FF:000001">
    <property type="entry name" value="Cell division protein ZapA"/>
    <property type="match status" value="1"/>
</dbReference>
<dbReference type="FunFam" id="3.30.160.880:FF:000001">
    <property type="entry name" value="Cell division protein ZapA"/>
    <property type="match status" value="1"/>
</dbReference>
<dbReference type="Gene3D" id="1.20.5.50">
    <property type="match status" value="1"/>
</dbReference>
<dbReference type="Gene3D" id="3.30.160.880">
    <property type="entry name" value="Cell division protein ZapA protomer, N-terminal domain"/>
    <property type="match status" value="1"/>
</dbReference>
<dbReference type="HAMAP" id="MF_02012">
    <property type="entry name" value="ZapA_type1"/>
    <property type="match status" value="1"/>
</dbReference>
<dbReference type="InterPro" id="IPR007838">
    <property type="entry name" value="Cell_div_ZapA-like"/>
</dbReference>
<dbReference type="InterPro" id="IPR036192">
    <property type="entry name" value="Cell_div_ZapA-like_sf"/>
</dbReference>
<dbReference type="InterPro" id="IPR023771">
    <property type="entry name" value="Cell_div_ZapA_eubact"/>
</dbReference>
<dbReference type="InterPro" id="IPR042233">
    <property type="entry name" value="Cell_div_ZapA_N"/>
</dbReference>
<dbReference type="NCBIfam" id="NF008209">
    <property type="entry name" value="PRK10972.1"/>
    <property type="match status" value="1"/>
</dbReference>
<dbReference type="PANTHER" id="PTHR34981">
    <property type="entry name" value="CELL DIVISION PROTEIN ZAPA"/>
    <property type="match status" value="1"/>
</dbReference>
<dbReference type="PANTHER" id="PTHR34981:SF1">
    <property type="entry name" value="CELL DIVISION PROTEIN ZAPA"/>
    <property type="match status" value="1"/>
</dbReference>
<dbReference type="Pfam" id="PF05164">
    <property type="entry name" value="ZapA"/>
    <property type="match status" value="1"/>
</dbReference>
<dbReference type="SUPFAM" id="SSF102829">
    <property type="entry name" value="Cell division protein ZapA-like"/>
    <property type="match status" value="1"/>
</dbReference>
<evidence type="ECO:0000255" key="1">
    <source>
        <dbReference type="HAMAP-Rule" id="MF_02012"/>
    </source>
</evidence>
<proteinExistence type="inferred from homology"/>
<reference key="1">
    <citation type="journal article" date="2006" name="Proc. Natl. Acad. Sci. U.S.A.">
        <title>Identification of genes subject to positive selection in uropathogenic strains of Escherichia coli: a comparative genomics approach.</title>
        <authorList>
            <person name="Chen S.L."/>
            <person name="Hung C.-S."/>
            <person name="Xu J."/>
            <person name="Reigstad C.S."/>
            <person name="Magrini V."/>
            <person name="Sabo A."/>
            <person name="Blasiar D."/>
            <person name="Bieri T."/>
            <person name="Meyer R.R."/>
            <person name="Ozersky P."/>
            <person name="Armstrong J.R."/>
            <person name="Fulton R.S."/>
            <person name="Latreille J.P."/>
            <person name="Spieth J."/>
            <person name="Hooton T.M."/>
            <person name="Mardis E.R."/>
            <person name="Hultgren S.J."/>
            <person name="Gordon J.I."/>
        </authorList>
    </citation>
    <scope>NUCLEOTIDE SEQUENCE [LARGE SCALE GENOMIC DNA]</scope>
    <source>
        <strain>UTI89 / UPEC</strain>
    </source>
</reference>
<name>ZAPA_ECOUT</name>
<organism>
    <name type="scientific">Escherichia coli (strain UTI89 / UPEC)</name>
    <dbReference type="NCBI Taxonomy" id="364106"/>
    <lineage>
        <taxon>Bacteria</taxon>
        <taxon>Pseudomonadati</taxon>
        <taxon>Pseudomonadota</taxon>
        <taxon>Gammaproteobacteria</taxon>
        <taxon>Enterobacterales</taxon>
        <taxon>Enterobacteriaceae</taxon>
        <taxon>Escherichia</taxon>
    </lineage>
</organism>
<feature type="chain" id="PRO_0000345646" description="Cell division protein ZapA">
    <location>
        <begin position="1"/>
        <end position="109"/>
    </location>
</feature>
<feature type="coiled-coil region" evidence="1">
    <location>
        <begin position="21"/>
        <end position="99"/>
    </location>
</feature>
<comment type="function">
    <text evidence="1">Activator of cell division through the inhibition of FtsZ GTPase activity, therefore promoting FtsZ assembly into bundles of protofilaments necessary for the formation of the division Z ring. It is recruited early at mid-cell but it is not essential for cell division.</text>
</comment>
<comment type="subunit">
    <text evidence="1">Homodimer. Interacts with FtsZ.</text>
</comment>
<comment type="subcellular location">
    <subcellularLocation>
        <location evidence="1">Cytoplasm</location>
    </subcellularLocation>
    <text evidence="1">Localizes at mid-cell.</text>
</comment>
<comment type="similarity">
    <text evidence="1">Belongs to the ZapA family. Type 1 subfamily.</text>
</comment>
<keyword id="KW-0131">Cell cycle</keyword>
<keyword id="KW-0132">Cell division</keyword>
<keyword id="KW-0175">Coiled coil</keyword>
<keyword id="KW-0963">Cytoplasm</keyword>
<keyword id="KW-0717">Septation</keyword>
<sequence length="109" mass="12594">MSAQPVDIQIFGRSLRVNCPPDQRDALNQAADDLNQRLQDLKERTRVTNTEQLVFIAALNISYELAQEKAKTRDYAASMEQRIRMLQQTIEQALLEQGRITEKTNQNFE</sequence>